<sequence>MMKAFFIAGTDTDVGKTVASKAILHALAAKDLRTIGYKPVAAGSDKTPEGWRNSDALHLQKAATVAVDYEDINPYALELPASPHIAAKHEKVEIDYAVLSRKLAQHKENADVVLVEGAGGWRVPVSDTDSLSTWVKQEDLPVVLVVGIKLGCLSHALLTAEVIKADGLNLVGWVANRVNPGTEHYAEIIDMLEERLEVPKLGEIPYIPSAKRKDLGKYINADVLLEL</sequence>
<feature type="chain" id="PRO_0000187996" description="ATP-dependent dethiobiotin synthetase BioD">
    <location>
        <begin position="1"/>
        <end position="227"/>
    </location>
</feature>
<feature type="active site" evidence="1">
    <location>
        <position position="38"/>
    </location>
</feature>
<feature type="binding site" evidence="1">
    <location>
        <begin position="13"/>
        <end position="18"/>
    </location>
    <ligand>
        <name>ATP</name>
        <dbReference type="ChEBI" id="CHEBI:30616"/>
    </ligand>
</feature>
<feature type="binding site" evidence="1">
    <location>
        <position position="17"/>
    </location>
    <ligand>
        <name>Mg(2+)</name>
        <dbReference type="ChEBI" id="CHEBI:18420"/>
    </ligand>
</feature>
<feature type="binding site" evidence="1">
    <location>
        <position position="55"/>
    </location>
    <ligand>
        <name>ATP</name>
        <dbReference type="ChEBI" id="CHEBI:30616"/>
    </ligand>
</feature>
<feature type="binding site" evidence="1">
    <location>
        <position position="55"/>
    </location>
    <ligand>
        <name>Mg(2+)</name>
        <dbReference type="ChEBI" id="CHEBI:18420"/>
    </ligand>
</feature>
<feature type="binding site" evidence="1">
    <location>
        <begin position="116"/>
        <end position="119"/>
    </location>
    <ligand>
        <name>ATP</name>
        <dbReference type="ChEBI" id="CHEBI:30616"/>
    </ligand>
</feature>
<feature type="binding site" evidence="1">
    <location>
        <position position="116"/>
    </location>
    <ligand>
        <name>Mg(2+)</name>
        <dbReference type="ChEBI" id="CHEBI:18420"/>
    </ligand>
</feature>
<feature type="binding site" evidence="1">
    <location>
        <begin position="176"/>
        <end position="177"/>
    </location>
    <ligand>
        <name>ATP</name>
        <dbReference type="ChEBI" id="CHEBI:30616"/>
    </ligand>
</feature>
<feature type="binding site" evidence="1">
    <location>
        <begin position="205"/>
        <end position="207"/>
    </location>
    <ligand>
        <name>ATP</name>
        <dbReference type="ChEBI" id="CHEBI:30616"/>
    </ligand>
</feature>
<evidence type="ECO:0000255" key="1">
    <source>
        <dbReference type="HAMAP-Rule" id="MF_00336"/>
    </source>
</evidence>
<proteinExistence type="inferred from homology"/>
<gene>
    <name evidence="1" type="primary">bioD</name>
    <name type="ordered locus">VV1330</name>
</gene>
<comment type="function">
    <text evidence="1">Catalyzes a mechanistically unusual reaction, the ATP-dependent insertion of CO2 between the N7 and N8 nitrogen atoms of 7,8-diaminopelargonic acid (DAPA, also called 7,8-diammoniononanoate) to form a ureido ring.</text>
</comment>
<comment type="catalytic activity">
    <reaction evidence="1">
        <text>(7R,8S)-7,8-diammoniononanoate + CO2 + ATP = (4R,5S)-dethiobiotin + ADP + phosphate + 3 H(+)</text>
        <dbReference type="Rhea" id="RHEA:15805"/>
        <dbReference type="ChEBI" id="CHEBI:15378"/>
        <dbReference type="ChEBI" id="CHEBI:16526"/>
        <dbReference type="ChEBI" id="CHEBI:30616"/>
        <dbReference type="ChEBI" id="CHEBI:43474"/>
        <dbReference type="ChEBI" id="CHEBI:149469"/>
        <dbReference type="ChEBI" id="CHEBI:149473"/>
        <dbReference type="ChEBI" id="CHEBI:456216"/>
        <dbReference type="EC" id="6.3.3.3"/>
    </reaction>
</comment>
<comment type="cofactor">
    <cofactor evidence="1">
        <name>Mg(2+)</name>
        <dbReference type="ChEBI" id="CHEBI:18420"/>
    </cofactor>
</comment>
<comment type="pathway">
    <text evidence="1">Cofactor biosynthesis; biotin biosynthesis; biotin from 7,8-diaminononanoate: step 1/2.</text>
</comment>
<comment type="subunit">
    <text evidence="1">Homodimer.</text>
</comment>
<comment type="subcellular location">
    <subcellularLocation>
        <location evidence="1">Cytoplasm</location>
    </subcellularLocation>
</comment>
<comment type="similarity">
    <text evidence="1">Belongs to the dethiobiotin synthetase family.</text>
</comment>
<keyword id="KW-0067">ATP-binding</keyword>
<keyword id="KW-0093">Biotin biosynthesis</keyword>
<keyword id="KW-0963">Cytoplasm</keyword>
<keyword id="KW-0436">Ligase</keyword>
<keyword id="KW-0460">Magnesium</keyword>
<keyword id="KW-0479">Metal-binding</keyword>
<keyword id="KW-0547">Nucleotide-binding</keyword>
<name>BIOD_VIBVY</name>
<reference key="1">
    <citation type="journal article" date="2003" name="Genome Res.">
        <title>Comparative genome analysis of Vibrio vulnificus, a marine pathogen.</title>
        <authorList>
            <person name="Chen C.-Y."/>
            <person name="Wu K.-M."/>
            <person name="Chang Y.-C."/>
            <person name="Chang C.-H."/>
            <person name="Tsai H.-C."/>
            <person name="Liao T.-L."/>
            <person name="Liu Y.-M."/>
            <person name="Chen H.-J."/>
            <person name="Shen A.B.-T."/>
            <person name="Li J.-C."/>
            <person name="Su T.-L."/>
            <person name="Shao C.-P."/>
            <person name="Lee C.-T."/>
            <person name="Hor L.-I."/>
            <person name="Tsai S.-F."/>
        </authorList>
    </citation>
    <scope>NUCLEOTIDE SEQUENCE [LARGE SCALE GENOMIC DNA]</scope>
    <source>
        <strain>YJ016</strain>
    </source>
</reference>
<organism>
    <name type="scientific">Vibrio vulnificus (strain YJ016)</name>
    <dbReference type="NCBI Taxonomy" id="196600"/>
    <lineage>
        <taxon>Bacteria</taxon>
        <taxon>Pseudomonadati</taxon>
        <taxon>Pseudomonadota</taxon>
        <taxon>Gammaproteobacteria</taxon>
        <taxon>Vibrionales</taxon>
        <taxon>Vibrionaceae</taxon>
        <taxon>Vibrio</taxon>
    </lineage>
</organism>
<dbReference type="EC" id="6.3.3.3" evidence="1"/>
<dbReference type="EMBL" id="BA000037">
    <property type="protein sequence ID" value="BAC94094.1"/>
    <property type="molecule type" value="Genomic_DNA"/>
</dbReference>
<dbReference type="RefSeq" id="WP_011080758.1">
    <property type="nucleotide sequence ID" value="NC_005139.1"/>
</dbReference>
<dbReference type="SMR" id="Q7MLU7"/>
<dbReference type="STRING" id="672.VV93_v1c12440"/>
<dbReference type="KEGG" id="vvy:VV1330"/>
<dbReference type="eggNOG" id="COG0132">
    <property type="taxonomic scope" value="Bacteria"/>
</dbReference>
<dbReference type="HOGENOM" id="CLU_072551_0_0_6"/>
<dbReference type="UniPathway" id="UPA00078">
    <property type="reaction ID" value="UER00161"/>
</dbReference>
<dbReference type="Proteomes" id="UP000002675">
    <property type="component" value="Chromosome I"/>
</dbReference>
<dbReference type="GO" id="GO:0005829">
    <property type="term" value="C:cytosol"/>
    <property type="evidence" value="ECO:0007669"/>
    <property type="project" value="TreeGrafter"/>
</dbReference>
<dbReference type="GO" id="GO:0005524">
    <property type="term" value="F:ATP binding"/>
    <property type="evidence" value="ECO:0007669"/>
    <property type="project" value="UniProtKB-UniRule"/>
</dbReference>
<dbReference type="GO" id="GO:0004141">
    <property type="term" value="F:dethiobiotin synthase activity"/>
    <property type="evidence" value="ECO:0007669"/>
    <property type="project" value="UniProtKB-UniRule"/>
</dbReference>
<dbReference type="GO" id="GO:0000287">
    <property type="term" value="F:magnesium ion binding"/>
    <property type="evidence" value="ECO:0007669"/>
    <property type="project" value="UniProtKB-UniRule"/>
</dbReference>
<dbReference type="GO" id="GO:0009102">
    <property type="term" value="P:biotin biosynthetic process"/>
    <property type="evidence" value="ECO:0007669"/>
    <property type="project" value="UniProtKB-UniRule"/>
</dbReference>
<dbReference type="CDD" id="cd03109">
    <property type="entry name" value="DTBS"/>
    <property type="match status" value="1"/>
</dbReference>
<dbReference type="FunFam" id="3.40.50.300:FF:000292">
    <property type="entry name" value="ATP-dependent dethiobiotin synthetase BioD"/>
    <property type="match status" value="1"/>
</dbReference>
<dbReference type="Gene3D" id="3.40.50.300">
    <property type="entry name" value="P-loop containing nucleotide triphosphate hydrolases"/>
    <property type="match status" value="1"/>
</dbReference>
<dbReference type="HAMAP" id="MF_00336">
    <property type="entry name" value="BioD"/>
    <property type="match status" value="1"/>
</dbReference>
<dbReference type="InterPro" id="IPR004472">
    <property type="entry name" value="DTB_synth_BioD"/>
</dbReference>
<dbReference type="InterPro" id="IPR027417">
    <property type="entry name" value="P-loop_NTPase"/>
</dbReference>
<dbReference type="NCBIfam" id="TIGR00347">
    <property type="entry name" value="bioD"/>
    <property type="match status" value="1"/>
</dbReference>
<dbReference type="PANTHER" id="PTHR43210">
    <property type="entry name" value="DETHIOBIOTIN SYNTHETASE"/>
    <property type="match status" value="1"/>
</dbReference>
<dbReference type="PANTHER" id="PTHR43210:SF5">
    <property type="entry name" value="DETHIOBIOTIN SYNTHETASE"/>
    <property type="match status" value="1"/>
</dbReference>
<dbReference type="Pfam" id="PF13500">
    <property type="entry name" value="AAA_26"/>
    <property type="match status" value="1"/>
</dbReference>
<dbReference type="PIRSF" id="PIRSF006755">
    <property type="entry name" value="DTB_synth"/>
    <property type="match status" value="1"/>
</dbReference>
<dbReference type="SUPFAM" id="SSF52540">
    <property type="entry name" value="P-loop containing nucleoside triphosphate hydrolases"/>
    <property type="match status" value="1"/>
</dbReference>
<accession>Q7MLU7</accession>
<protein>
    <recommendedName>
        <fullName evidence="1">ATP-dependent dethiobiotin synthetase BioD</fullName>
        <ecNumber evidence="1">6.3.3.3</ecNumber>
    </recommendedName>
    <alternativeName>
        <fullName evidence="1">DTB synthetase</fullName>
        <shortName evidence="1">DTBS</shortName>
    </alternativeName>
    <alternativeName>
        <fullName evidence="1">Dethiobiotin synthase</fullName>
    </alternativeName>
</protein>